<accession>P64236</accession>
<accession>Q99UM0</accession>
<proteinExistence type="inferred from homology"/>
<keyword id="KW-0963">Cytoplasm</keyword>
<keyword id="KW-0274">FAD</keyword>
<keyword id="KW-0285">Flavoprotein</keyword>
<keyword id="KW-0489">Methyltransferase</keyword>
<keyword id="KW-0520">NAD</keyword>
<keyword id="KW-0521">NADP</keyword>
<keyword id="KW-0808">Transferase</keyword>
<keyword id="KW-0819">tRNA processing</keyword>
<organism>
    <name type="scientific">Staphylococcus aureus (strain MW2)</name>
    <dbReference type="NCBI Taxonomy" id="196620"/>
    <lineage>
        <taxon>Bacteria</taxon>
        <taxon>Bacillati</taxon>
        <taxon>Bacillota</taxon>
        <taxon>Bacilli</taxon>
        <taxon>Bacillales</taxon>
        <taxon>Staphylococcaceae</taxon>
        <taxon>Staphylococcus</taxon>
    </lineage>
</organism>
<feature type="chain" id="PRO_0000117263" description="Methylenetetrahydrofolate--tRNA-(uracil-5-)-methyltransferase TrmFO">
    <location>
        <begin position="1"/>
        <end position="435"/>
    </location>
</feature>
<feature type="binding site" evidence="1">
    <location>
        <begin position="9"/>
        <end position="14"/>
    </location>
    <ligand>
        <name>FAD</name>
        <dbReference type="ChEBI" id="CHEBI:57692"/>
    </ligand>
</feature>
<protein>
    <recommendedName>
        <fullName evidence="1">Methylenetetrahydrofolate--tRNA-(uracil-5-)-methyltransferase TrmFO</fullName>
        <ecNumber evidence="1">2.1.1.74</ecNumber>
    </recommendedName>
    <alternativeName>
        <fullName evidence="1">Folate-dependent tRNA (uracil-5-)-methyltransferase</fullName>
    </alternativeName>
    <alternativeName>
        <fullName evidence="1">Folate-dependent tRNA(M-5-U54)-methyltransferase</fullName>
    </alternativeName>
</protein>
<sequence length="435" mass="48371">MTQTVNVIGAGLAGSEAAYQLAERGIKVNLIEMRPVKQTPAHHTDKFAELVCSNSLRGNALTNGVGVLKEEMRRLNSIIIEAADKARVPAGGALAVDRHDFSGYITETLKNHENITVINEEINAIPDGYTIIATGPLTTETLAQEIVDITGKDQLYFYDAAAPIIEKESIDMDKVYLKSRYDKGEAAYLNCPMTEDEFNRFYDAVLEAEVAPVNSFEKEKYFEGCMPFEVMAERGRKTLLFGPMKPVGLEDPKTGKRPYAVVQLRQDDAAGTLYNIVGFQTHLKWGAQKEVIKLIPGLENVDIVRYGVMHRNTFINSPDVLNEKYELISQPNIQFAGQMTGVEGYVESAASGLVAGINLAHKILGKGEVVFPRETMIGSMAYYISHAKNNKNFQPMNANFGLLPSLETRIKDKKERYEAQANRALDYLENFKKTL</sequence>
<reference key="1">
    <citation type="journal article" date="2002" name="Lancet">
        <title>Genome and virulence determinants of high virulence community-acquired MRSA.</title>
        <authorList>
            <person name="Baba T."/>
            <person name="Takeuchi F."/>
            <person name="Kuroda M."/>
            <person name="Yuzawa H."/>
            <person name="Aoki K."/>
            <person name="Oguchi A."/>
            <person name="Nagai Y."/>
            <person name="Iwama N."/>
            <person name="Asano K."/>
            <person name="Naimi T."/>
            <person name="Kuroda H."/>
            <person name="Cui L."/>
            <person name="Yamamoto K."/>
            <person name="Hiramatsu K."/>
        </authorList>
    </citation>
    <scope>NUCLEOTIDE SEQUENCE [LARGE SCALE GENOMIC DNA]</scope>
    <source>
        <strain>MW2</strain>
    </source>
</reference>
<comment type="function">
    <text evidence="1">Catalyzes the folate-dependent formation of 5-methyl-uridine at position 54 (M-5-U54) in all tRNAs.</text>
</comment>
<comment type="catalytic activity">
    <reaction evidence="1">
        <text>uridine(54) in tRNA + (6R)-5,10-methylene-5,6,7,8-tetrahydrofolate + NADH + H(+) = 5-methyluridine(54) in tRNA + (6S)-5,6,7,8-tetrahydrofolate + NAD(+)</text>
        <dbReference type="Rhea" id="RHEA:16873"/>
        <dbReference type="Rhea" id="RHEA-COMP:10167"/>
        <dbReference type="Rhea" id="RHEA-COMP:10193"/>
        <dbReference type="ChEBI" id="CHEBI:15378"/>
        <dbReference type="ChEBI" id="CHEBI:15636"/>
        <dbReference type="ChEBI" id="CHEBI:57453"/>
        <dbReference type="ChEBI" id="CHEBI:57540"/>
        <dbReference type="ChEBI" id="CHEBI:57945"/>
        <dbReference type="ChEBI" id="CHEBI:65315"/>
        <dbReference type="ChEBI" id="CHEBI:74447"/>
        <dbReference type="EC" id="2.1.1.74"/>
    </reaction>
</comment>
<comment type="catalytic activity">
    <reaction evidence="1">
        <text>uridine(54) in tRNA + (6R)-5,10-methylene-5,6,7,8-tetrahydrofolate + NADPH + H(+) = 5-methyluridine(54) in tRNA + (6S)-5,6,7,8-tetrahydrofolate + NADP(+)</text>
        <dbReference type="Rhea" id="RHEA:62372"/>
        <dbReference type="Rhea" id="RHEA-COMP:10167"/>
        <dbReference type="Rhea" id="RHEA-COMP:10193"/>
        <dbReference type="ChEBI" id="CHEBI:15378"/>
        <dbReference type="ChEBI" id="CHEBI:15636"/>
        <dbReference type="ChEBI" id="CHEBI:57453"/>
        <dbReference type="ChEBI" id="CHEBI:57783"/>
        <dbReference type="ChEBI" id="CHEBI:58349"/>
        <dbReference type="ChEBI" id="CHEBI:65315"/>
        <dbReference type="ChEBI" id="CHEBI:74447"/>
        <dbReference type="EC" id="2.1.1.74"/>
    </reaction>
</comment>
<comment type="cofactor">
    <cofactor evidence="1">
        <name>FAD</name>
        <dbReference type="ChEBI" id="CHEBI:57692"/>
    </cofactor>
</comment>
<comment type="subcellular location">
    <subcellularLocation>
        <location evidence="1">Cytoplasm</location>
    </subcellularLocation>
</comment>
<comment type="similarity">
    <text evidence="1">Belongs to the MnmG family. TrmFO subfamily.</text>
</comment>
<evidence type="ECO:0000255" key="1">
    <source>
        <dbReference type="HAMAP-Rule" id="MF_01037"/>
    </source>
</evidence>
<name>TRMFO_STAAW</name>
<gene>
    <name evidence="1" type="primary">trmFO</name>
    <name type="synonym">gid</name>
    <name type="ordered locus">MW1134</name>
</gene>
<dbReference type="EC" id="2.1.1.74" evidence="1"/>
<dbReference type="EMBL" id="BA000033">
    <property type="protein sequence ID" value="BAB94999.1"/>
    <property type="molecule type" value="Genomic_DNA"/>
</dbReference>
<dbReference type="RefSeq" id="WP_000195254.1">
    <property type="nucleotide sequence ID" value="NC_003923.1"/>
</dbReference>
<dbReference type="SMR" id="P64236"/>
<dbReference type="KEGG" id="sam:MW1134"/>
<dbReference type="HOGENOM" id="CLU_033057_1_0_9"/>
<dbReference type="GO" id="GO:0005829">
    <property type="term" value="C:cytosol"/>
    <property type="evidence" value="ECO:0007669"/>
    <property type="project" value="TreeGrafter"/>
</dbReference>
<dbReference type="GO" id="GO:0050660">
    <property type="term" value="F:flavin adenine dinucleotide binding"/>
    <property type="evidence" value="ECO:0007669"/>
    <property type="project" value="UniProtKB-UniRule"/>
</dbReference>
<dbReference type="GO" id="GO:0047151">
    <property type="term" value="F:tRNA (uracil(54)-C5)-methyltransferase activity, 5,10-methylenetetrahydrofolate-dependent"/>
    <property type="evidence" value="ECO:0007669"/>
    <property type="project" value="UniProtKB-UniRule"/>
</dbReference>
<dbReference type="GO" id="GO:0030488">
    <property type="term" value="P:tRNA methylation"/>
    <property type="evidence" value="ECO:0007669"/>
    <property type="project" value="TreeGrafter"/>
</dbReference>
<dbReference type="GO" id="GO:0002098">
    <property type="term" value="P:tRNA wobble uridine modification"/>
    <property type="evidence" value="ECO:0007669"/>
    <property type="project" value="TreeGrafter"/>
</dbReference>
<dbReference type="FunFam" id="3.50.50.60:FF:000035">
    <property type="entry name" value="Methylenetetrahydrofolate--tRNA-(uracil-5-)-methyltransferase TrmFO"/>
    <property type="match status" value="1"/>
</dbReference>
<dbReference type="FunFam" id="3.50.50.60:FF:000040">
    <property type="entry name" value="Methylenetetrahydrofolate--tRNA-(uracil-5-)-methyltransferase TrmFO"/>
    <property type="match status" value="1"/>
</dbReference>
<dbReference type="Gene3D" id="3.50.50.60">
    <property type="entry name" value="FAD/NAD(P)-binding domain"/>
    <property type="match status" value="2"/>
</dbReference>
<dbReference type="HAMAP" id="MF_01037">
    <property type="entry name" value="TrmFO"/>
    <property type="match status" value="1"/>
</dbReference>
<dbReference type="InterPro" id="IPR036188">
    <property type="entry name" value="FAD/NAD-bd_sf"/>
</dbReference>
<dbReference type="InterPro" id="IPR002218">
    <property type="entry name" value="MnmG-rel"/>
</dbReference>
<dbReference type="InterPro" id="IPR020595">
    <property type="entry name" value="MnmG-rel_CS"/>
</dbReference>
<dbReference type="InterPro" id="IPR040131">
    <property type="entry name" value="MnmG_N"/>
</dbReference>
<dbReference type="InterPro" id="IPR004417">
    <property type="entry name" value="TrmFO"/>
</dbReference>
<dbReference type="NCBIfam" id="TIGR00137">
    <property type="entry name" value="gid_trmFO"/>
    <property type="match status" value="1"/>
</dbReference>
<dbReference type="NCBIfam" id="NF003739">
    <property type="entry name" value="PRK05335.1"/>
    <property type="match status" value="1"/>
</dbReference>
<dbReference type="PANTHER" id="PTHR11806">
    <property type="entry name" value="GLUCOSE INHIBITED DIVISION PROTEIN A"/>
    <property type="match status" value="1"/>
</dbReference>
<dbReference type="PANTHER" id="PTHR11806:SF2">
    <property type="entry name" value="METHYLENETETRAHYDROFOLATE--TRNA-(URACIL-5-)-METHYLTRANSFERASE TRMFO"/>
    <property type="match status" value="1"/>
</dbReference>
<dbReference type="Pfam" id="PF01134">
    <property type="entry name" value="GIDA"/>
    <property type="match status" value="1"/>
</dbReference>
<dbReference type="SUPFAM" id="SSF51905">
    <property type="entry name" value="FAD/NAD(P)-binding domain"/>
    <property type="match status" value="1"/>
</dbReference>
<dbReference type="PROSITE" id="PS01281">
    <property type="entry name" value="GIDA_2"/>
    <property type="match status" value="1"/>
</dbReference>